<organism>
    <name type="scientific">Staphylococcus aureus (strain bovine RF122 / ET3-1)</name>
    <dbReference type="NCBI Taxonomy" id="273036"/>
    <lineage>
        <taxon>Bacteria</taxon>
        <taxon>Bacillati</taxon>
        <taxon>Bacillota</taxon>
        <taxon>Bacilli</taxon>
        <taxon>Bacillales</taxon>
        <taxon>Staphylococcaceae</taxon>
        <taxon>Staphylococcus</taxon>
    </lineage>
</organism>
<reference key="1">
    <citation type="journal article" date="2007" name="PLoS ONE">
        <title>Molecular correlates of host specialization in Staphylococcus aureus.</title>
        <authorList>
            <person name="Herron-Olson L."/>
            <person name="Fitzgerald J.R."/>
            <person name="Musser J.M."/>
            <person name="Kapur V."/>
        </authorList>
    </citation>
    <scope>NUCLEOTIDE SEQUENCE [LARGE SCALE GENOMIC DNA]</scope>
    <source>
        <strain>bovine RF122 / ET3-1</strain>
    </source>
</reference>
<gene>
    <name type="ordered locus">SAB0444</name>
</gene>
<name>ISPE_STAAB</name>
<protein>
    <recommendedName>
        <fullName evidence="1">Putative 4-diphosphocytidyl-2-C-methyl-D-erythritol kinase</fullName>
        <shortName evidence="1">CMK</shortName>
        <ecNumber evidence="1">2.7.1.148</ecNumber>
    </recommendedName>
    <alternativeName>
        <fullName evidence="1">4-(cytidine-5'-diphospho)-2-C-methyl-D-erythritol kinase</fullName>
    </alternativeName>
</protein>
<dbReference type="EC" id="2.7.1.148" evidence="1"/>
<dbReference type="EMBL" id="AJ938182">
    <property type="protein sequence ID" value="CAI80132.1"/>
    <property type="molecule type" value="Genomic_DNA"/>
</dbReference>
<dbReference type="RefSeq" id="WP_000638873.1">
    <property type="nucleotide sequence ID" value="NC_007622.1"/>
</dbReference>
<dbReference type="SMR" id="Q2YVV0"/>
<dbReference type="KEGG" id="sab:SAB0444"/>
<dbReference type="HOGENOM" id="CLU_053057_1_1_9"/>
<dbReference type="GO" id="GO:0050515">
    <property type="term" value="F:4-(cytidine 5'-diphospho)-2-C-methyl-D-erythritol kinase activity"/>
    <property type="evidence" value="ECO:0007669"/>
    <property type="project" value="UniProtKB-UniRule"/>
</dbReference>
<dbReference type="GO" id="GO:0005524">
    <property type="term" value="F:ATP binding"/>
    <property type="evidence" value="ECO:0007669"/>
    <property type="project" value="UniProtKB-UniRule"/>
</dbReference>
<dbReference type="GO" id="GO:0016114">
    <property type="term" value="P:terpenoid biosynthetic process"/>
    <property type="evidence" value="ECO:0007669"/>
    <property type="project" value="InterPro"/>
</dbReference>
<dbReference type="FunFam" id="3.30.230.10:FF:000029">
    <property type="entry name" value="4-diphosphocytidyl-2-C-methyl-D-erythritol kinase"/>
    <property type="match status" value="1"/>
</dbReference>
<dbReference type="FunFam" id="3.30.70.890:FF:000006">
    <property type="entry name" value="4-diphosphocytidyl-2-C-methyl-D-erythritol kinase"/>
    <property type="match status" value="1"/>
</dbReference>
<dbReference type="Gene3D" id="3.30.230.10">
    <property type="match status" value="1"/>
</dbReference>
<dbReference type="Gene3D" id="3.30.70.890">
    <property type="entry name" value="GHMP kinase, C-terminal domain"/>
    <property type="match status" value="1"/>
</dbReference>
<dbReference type="HAMAP" id="MF_00061">
    <property type="entry name" value="IspE"/>
    <property type="match status" value="1"/>
</dbReference>
<dbReference type="InterPro" id="IPR013750">
    <property type="entry name" value="GHMP_kinase_C_dom"/>
</dbReference>
<dbReference type="InterPro" id="IPR036554">
    <property type="entry name" value="GHMP_kinase_C_sf"/>
</dbReference>
<dbReference type="InterPro" id="IPR006204">
    <property type="entry name" value="GHMP_kinase_N_dom"/>
</dbReference>
<dbReference type="InterPro" id="IPR004424">
    <property type="entry name" value="IspE"/>
</dbReference>
<dbReference type="InterPro" id="IPR020568">
    <property type="entry name" value="Ribosomal_Su5_D2-typ_SF"/>
</dbReference>
<dbReference type="InterPro" id="IPR014721">
    <property type="entry name" value="Ribsml_uS5_D2-typ_fold_subgr"/>
</dbReference>
<dbReference type="NCBIfam" id="TIGR00154">
    <property type="entry name" value="ispE"/>
    <property type="match status" value="1"/>
</dbReference>
<dbReference type="PANTHER" id="PTHR43527">
    <property type="entry name" value="4-DIPHOSPHOCYTIDYL-2-C-METHYL-D-ERYTHRITOL KINASE, CHLOROPLASTIC"/>
    <property type="match status" value="1"/>
</dbReference>
<dbReference type="PANTHER" id="PTHR43527:SF2">
    <property type="entry name" value="4-DIPHOSPHOCYTIDYL-2-C-METHYL-D-ERYTHRITOL KINASE, CHLOROPLASTIC"/>
    <property type="match status" value="1"/>
</dbReference>
<dbReference type="Pfam" id="PF08544">
    <property type="entry name" value="GHMP_kinases_C"/>
    <property type="match status" value="1"/>
</dbReference>
<dbReference type="Pfam" id="PF00288">
    <property type="entry name" value="GHMP_kinases_N"/>
    <property type="match status" value="1"/>
</dbReference>
<dbReference type="PIRSF" id="PIRSF010376">
    <property type="entry name" value="IspE"/>
    <property type="match status" value="1"/>
</dbReference>
<dbReference type="SUPFAM" id="SSF55060">
    <property type="entry name" value="GHMP Kinase, C-terminal domain"/>
    <property type="match status" value="1"/>
</dbReference>
<dbReference type="SUPFAM" id="SSF54211">
    <property type="entry name" value="Ribosomal protein S5 domain 2-like"/>
    <property type="match status" value="1"/>
</dbReference>
<sequence>MIYETAPAKINFTLDTLFKRNDGYHEIEMIMTTVDLNDRLTFHKRKDRKIVVEIEHNYVPSNHKNLAYRAAQLFIEQYQLKQGVTISIDKEIPVSAGLAGGSADAAATLRGLNRLFDIGASLEELAQLGSKIGTDIPFCIYNKTALCTGRGEKIEFLNKPPSAWVILAKPNLGISSPDIFKLINLDKRYDVHTKMCYEALENRDYQQLCQSLSNRLEPISVSKHPQIDKLKNNMLKSGADGALMSGSGPTVYGLARKESQAKNIYNAVNGCCNEVYLVRLLG</sequence>
<proteinExistence type="inferred from homology"/>
<accession>Q2YVV0</accession>
<keyword id="KW-0067">ATP-binding</keyword>
<keyword id="KW-0418">Kinase</keyword>
<keyword id="KW-0547">Nucleotide-binding</keyword>
<keyword id="KW-0808">Transferase</keyword>
<comment type="function">
    <text evidence="1">Catalyzes the phosphorylation of the position 2 hydroxy group of 4-diphosphocytidyl-2C-methyl-D-erythritol.</text>
</comment>
<comment type="catalytic activity">
    <reaction evidence="1">
        <text>4-CDP-2-C-methyl-D-erythritol + ATP = 4-CDP-2-C-methyl-D-erythritol 2-phosphate + ADP + H(+)</text>
        <dbReference type="Rhea" id="RHEA:18437"/>
        <dbReference type="ChEBI" id="CHEBI:15378"/>
        <dbReference type="ChEBI" id="CHEBI:30616"/>
        <dbReference type="ChEBI" id="CHEBI:57823"/>
        <dbReference type="ChEBI" id="CHEBI:57919"/>
        <dbReference type="ChEBI" id="CHEBI:456216"/>
        <dbReference type="EC" id="2.7.1.148"/>
    </reaction>
</comment>
<comment type="similarity">
    <text evidence="1">Belongs to the GHMP kinase family. IspE subfamily.</text>
</comment>
<evidence type="ECO:0000255" key="1">
    <source>
        <dbReference type="HAMAP-Rule" id="MF_00061"/>
    </source>
</evidence>
<feature type="chain" id="PRO_0000235134" description="Putative 4-diphosphocytidyl-2-C-methyl-D-erythritol kinase">
    <location>
        <begin position="1"/>
        <end position="282"/>
    </location>
</feature>
<feature type="active site" evidence="1">
    <location>
        <position position="9"/>
    </location>
</feature>
<feature type="active site" evidence="1">
    <location>
        <position position="135"/>
    </location>
</feature>
<feature type="binding site" evidence="1">
    <location>
        <begin position="93"/>
        <end position="103"/>
    </location>
    <ligand>
        <name>ATP</name>
        <dbReference type="ChEBI" id="CHEBI:30616"/>
    </ligand>
</feature>